<name>SUR8_DROSI</name>
<keyword id="KW-0433">Leucine-rich repeat</keyword>
<keyword id="KW-1185">Reference proteome</keyword>
<keyword id="KW-0677">Repeat</keyword>
<reference key="1">
    <citation type="journal article" date="2007" name="Nature">
        <title>Evolution of genes and genomes on the Drosophila phylogeny.</title>
        <authorList>
            <consortium name="Drosophila 12 genomes consortium"/>
        </authorList>
    </citation>
    <scope>NUCLEOTIDE SEQUENCE [LARGE SCALE GENOMIC DNA]</scope>
</reference>
<sequence length="680" mass="73104">MNLCSSGATASTTSLSSTGQAERSGGVPGGGAEGGGGGGGSGNSGGGGKTSDVSAEASTLCFAGGSGTAGAITGTEELSNANSPANGAGGASGSTGSGQQPTGSNGHSHLHNENNANMPPETRPKMVTVKHPESNKPKPTTKKSKPIQADQDVIKALQRCRIKRLDLSKSSITVIPSTVKECVHLTELYLYSNKIGQLPPEIGCLVSLRNLALNENSLTSLPESLQNCSQLKVLDLRHNKLAEIPPVIYRLRSLTTLYLRFNRITAVADDLRQLVNLTMLSLRENKIRELGSAIGALVNLTTLDVSHNHLEHLPEDIGNCVNLSALDLQHNELLDIPDSIGNLKSLVRLGMRYNRLSSVPATLKNCKSMDEFNVEGNGITQLPDGMLASLSGLTTITLSRNQFASYPTGGPAQFTNVYSINLEHNRIDKIPYGIFSRAKGLTKLNMKENMLTALPLDIGTWVNMVELNLATNALQKLPDDIMNLQNLEILILSNNMLKKIPNTIGNLRRLRILDLEENRIEVLPHEIGLLHELQRLILQTNQITMLPRSIGHLGNLTHLSVSENNLQFLPEEIGSLESLENLYINQNPGLEKLPFELALCQNLKYLNIDKCPLSTIPPEIQAGGPSLVLQWLKMHSPYRQIDCYYQYELQTVNQAPGAGGNGGGGAAAAGGSASRSSDRR</sequence>
<protein>
    <recommendedName>
        <fullName>Leucine-rich repeat protein soc-2 homolog</fullName>
    </recommendedName>
    <alternativeName>
        <fullName>Protein Sur-8 homolog</fullName>
    </alternativeName>
    <alternativeName>
        <fullName>Protein soc-2 homolog</fullName>
    </alternativeName>
</protein>
<organism>
    <name type="scientific">Drosophila simulans</name>
    <name type="common">Fruit fly</name>
    <dbReference type="NCBI Taxonomy" id="7240"/>
    <lineage>
        <taxon>Eukaryota</taxon>
        <taxon>Metazoa</taxon>
        <taxon>Ecdysozoa</taxon>
        <taxon>Arthropoda</taxon>
        <taxon>Hexapoda</taxon>
        <taxon>Insecta</taxon>
        <taxon>Pterygota</taxon>
        <taxon>Neoptera</taxon>
        <taxon>Endopterygota</taxon>
        <taxon>Diptera</taxon>
        <taxon>Brachycera</taxon>
        <taxon>Muscomorpha</taxon>
        <taxon>Ephydroidea</taxon>
        <taxon>Drosophilidae</taxon>
        <taxon>Drosophila</taxon>
        <taxon>Sophophora</taxon>
    </lineage>
</organism>
<proteinExistence type="inferred from homology"/>
<accession>B4QVR7</accession>
<feature type="chain" id="PRO_0000385640" description="Leucine-rich repeat protein soc-2 homolog">
    <location>
        <begin position="1"/>
        <end position="680"/>
    </location>
</feature>
<feature type="repeat" description="LRR 1">
    <location>
        <begin position="161"/>
        <end position="182"/>
    </location>
</feature>
<feature type="repeat" description="LRR 2">
    <location>
        <begin position="184"/>
        <end position="205"/>
    </location>
</feature>
<feature type="repeat" description="LRR 3">
    <location>
        <begin position="207"/>
        <end position="228"/>
    </location>
</feature>
<feature type="repeat" description="LRR 4">
    <location>
        <begin position="230"/>
        <end position="251"/>
    </location>
</feature>
<feature type="repeat" description="LRR 5">
    <location>
        <begin position="253"/>
        <end position="274"/>
    </location>
</feature>
<feature type="repeat" description="LRR 6">
    <location>
        <begin position="276"/>
        <end position="297"/>
    </location>
</feature>
<feature type="repeat" description="LRR 7">
    <location>
        <begin position="299"/>
        <end position="320"/>
    </location>
</feature>
<feature type="repeat" description="LRR 8">
    <location>
        <begin position="322"/>
        <end position="343"/>
    </location>
</feature>
<feature type="repeat" description="LRR 9">
    <location>
        <begin position="345"/>
        <end position="367"/>
    </location>
</feature>
<feature type="repeat" description="LRR 10">
    <location>
        <begin position="368"/>
        <end position="389"/>
    </location>
</feature>
<feature type="repeat" description="LRR 11">
    <location>
        <begin position="392"/>
        <end position="413"/>
    </location>
</feature>
<feature type="repeat" description="LRR 12">
    <location>
        <begin position="416"/>
        <end position="437"/>
    </location>
</feature>
<feature type="repeat" description="LRR 13">
    <location>
        <begin position="440"/>
        <end position="461"/>
    </location>
</feature>
<feature type="repeat" description="LRR 14">
    <location>
        <begin position="463"/>
        <end position="484"/>
    </location>
</feature>
<feature type="repeat" description="LRR 15">
    <location>
        <begin position="486"/>
        <end position="507"/>
    </location>
</feature>
<feature type="repeat" description="LRR 16">
    <location>
        <begin position="509"/>
        <end position="530"/>
    </location>
</feature>
<feature type="repeat" description="LRR 17">
    <location>
        <begin position="532"/>
        <end position="553"/>
    </location>
</feature>
<feature type="repeat" description="LRR 18">
    <location>
        <begin position="555"/>
        <end position="576"/>
    </location>
</feature>
<feature type="repeat" description="LRR 19">
    <location>
        <begin position="578"/>
        <end position="600"/>
    </location>
</feature>
<feature type="repeat" description="LRR 20">
    <location>
        <begin position="602"/>
        <end position="623"/>
    </location>
</feature>
<feature type="region of interest" description="Disordered" evidence="2">
    <location>
        <begin position="1"/>
        <end position="54"/>
    </location>
</feature>
<feature type="region of interest" description="Disordered" evidence="2">
    <location>
        <begin position="73"/>
        <end position="149"/>
    </location>
</feature>
<feature type="region of interest" description="Disordered" evidence="2">
    <location>
        <begin position="658"/>
        <end position="680"/>
    </location>
</feature>
<feature type="compositionally biased region" description="Low complexity" evidence="2">
    <location>
        <begin position="1"/>
        <end position="19"/>
    </location>
</feature>
<feature type="compositionally biased region" description="Gly residues" evidence="2">
    <location>
        <begin position="26"/>
        <end position="49"/>
    </location>
</feature>
<feature type="compositionally biased region" description="Low complexity" evidence="2">
    <location>
        <begin position="73"/>
        <end position="86"/>
    </location>
</feature>
<feature type="compositionally biased region" description="Gly residues" evidence="2">
    <location>
        <begin position="87"/>
        <end position="96"/>
    </location>
</feature>
<feature type="compositionally biased region" description="Low complexity" evidence="2">
    <location>
        <begin position="97"/>
        <end position="106"/>
    </location>
</feature>
<feature type="compositionally biased region" description="Gly residues" evidence="2">
    <location>
        <begin position="658"/>
        <end position="668"/>
    </location>
</feature>
<feature type="compositionally biased region" description="Low complexity" evidence="2">
    <location>
        <begin position="669"/>
        <end position="680"/>
    </location>
</feature>
<dbReference type="EMBL" id="CM000364">
    <property type="protein sequence ID" value="EDX12580.1"/>
    <property type="status" value="ALT_SEQ"/>
    <property type="molecule type" value="Genomic_DNA"/>
</dbReference>
<dbReference type="SMR" id="B4QVR7"/>
<dbReference type="STRING" id="7240.B4QVR7"/>
<dbReference type="OrthoDB" id="676979at2759"/>
<dbReference type="ChiTaRS" id="Sur-8">
    <property type="organism name" value="fly"/>
</dbReference>
<dbReference type="Proteomes" id="UP000000304">
    <property type="component" value="Chromosome 3R"/>
</dbReference>
<dbReference type="FunFam" id="3.80.10.10:FF:000031">
    <property type="entry name" value="leucine-rich repeat protein SHOC-2"/>
    <property type="match status" value="1"/>
</dbReference>
<dbReference type="FunFam" id="3.80.10.10:FF:000115">
    <property type="entry name" value="leucine-rich repeat protein SHOC-2"/>
    <property type="match status" value="1"/>
</dbReference>
<dbReference type="FunFam" id="3.80.10.10:FF:000281">
    <property type="entry name" value="Leucine-rich repeat protein soc-2"/>
    <property type="match status" value="1"/>
</dbReference>
<dbReference type="FunFam" id="3.80.10.10:FF:000450">
    <property type="entry name" value="Leucine-rich repeat protein soc-2"/>
    <property type="match status" value="1"/>
</dbReference>
<dbReference type="Gene3D" id="3.80.10.10">
    <property type="entry name" value="Ribonuclease Inhibitor"/>
    <property type="match status" value="4"/>
</dbReference>
<dbReference type="InterPro" id="IPR001611">
    <property type="entry name" value="Leu-rich_rpt"/>
</dbReference>
<dbReference type="InterPro" id="IPR003591">
    <property type="entry name" value="Leu-rich_rpt_typical-subtyp"/>
</dbReference>
<dbReference type="InterPro" id="IPR050715">
    <property type="entry name" value="LRR-SigEffector_domain"/>
</dbReference>
<dbReference type="InterPro" id="IPR032675">
    <property type="entry name" value="LRR_dom_sf"/>
</dbReference>
<dbReference type="InterPro" id="IPR055414">
    <property type="entry name" value="LRR_R13L4/SHOC2-like"/>
</dbReference>
<dbReference type="PANTHER" id="PTHR45752:SF187">
    <property type="entry name" value="LEUCINE-RICH REPEAT AND IQ DOMAIN-CONTAINING PROTEIN 4"/>
    <property type="match status" value="1"/>
</dbReference>
<dbReference type="PANTHER" id="PTHR45752">
    <property type="entry name" value="LEUCINE-RICH REPEAT-CONTAINING"/>
    <property type="match status" value="1"/>
</dbReference>
<dbReference type="Pfam" id="PF00560">
    <property type="entry name" value="LRR_1"/>
    <property type="match status" value="1"/>
</dbReference>
<dbReference type="Pfam" id="PF23598">
    <property type="entry name" value="LRR_14"/>
    <property type="match status" value="2"/>
</dbReference>
<dbReference type="Pfam" id="PF13855">
    <property type="entry name" value="LRR_8"/>
    <property type="match status" value="1"/>
</dbReference>
<dbReference type="SMART" id="SM00364">
    <property type="entry name" value="LRR_BAC"/>
    <property type="match status" value="10"/>
</dbReference>
<dbReference type="SMART" id="SM00365">
    <property type="entry name" value="LRR_SD22"/>
    <property type="match status" value="7"/>
</dbReference>
<dbReference type="SMART" id="SM00369">
    <property type="entry name" value="LRR_TYP"/>
    <property type="match status" value="15"/>
</dbReference>
<dbReference type="SUPFAM" id="SSF52058">
    <property type="entry name" value="L domain-like"/>
    <property type="match status" value="2"/>
</dbReference>
<dbReference type="PROSITE" id="PS51450">
    <property type="entry name" value="LRR"/>
    <property type="match status" value="18"/>
</dbReference>
<comment type="function">
    <text evidence="1">Acts as a Ras effector and participates in MAPK pathway activation. Probably acts as a regulatory subunit of protein phosphatase that specifically dephosphorylates Raf kinase and stimulate Raf activity at specialized signaling complexes upon Ras activation (By similarity).</text>
</comment>
<comment type="similarity">
    <text evidence="3">Belongs to the SHOC2 family.</text>
</comment>
<comment type="sequence caution" evidence="3">
    <conflict type="erroneous gene model prediction">
        <sequence resource="EMBL-CDS" id="EDX12580"/>
    </conflict>
</comment>
<evidence type="ECO:0000250" key="1"/>
<evidence type="ECO:0000256" key="2">
    <source>
        <dbReference type="SAM" id="MobiDB-lite"/>
    </source>
</evidence>
<evidence type="ECO:0000305" key="3"/>
<gene>
    <name type="primary">Sur-8</name>
    <name type="ORF">GD20236</name>
</gene>